<accession>Q54J90</accession>
<feature type="chain" id="PRO_0000346994" description="Uncharacterized protein DDB_G0288213">
    <location>
        <begin position="1"/>
        <end position="95"/>
    </location>
</feature>
<sequence>MVSTNNELSTEKKLNNLEYFPMNNNENFNRDEMRRIRRQRQQQHLQQQYQIRQIKKELKENKSTGSKILNFLKKFIENDGENQTQTLKVKMNFVY</sequence>
<reference key="1">
    <citation type="journal article" date="2005" name="Nature">
        <title>The genome of the social amoeba Dictyostelium discoideum.</title>
        <authorList>
            <person name="Eichinger L."/>
            <person name="Pachebat J.A."/>
            <person name="Gloeckner G."/>
            <person name="Rajandream M.A."/>
            <person name="Sucgang R."/>
            <person name="Berriman M."/>
            <person name="Song J."/>
            <person name="Olsen R."/>
            <person name="Szafranski K."/>
            <person name="Xu Q."/>
            <person name="Tunggal B."/>
            <person name="Kummerfeld S."/>
            <person name="Madera M."/>
            <person name="Konfortov B.A."/>
            <person name="Rivero F."/>
            <person name="Bankier A.T."/>
            <person name="Lehmann R."/>
            <person name="Hamlin N."/>
            <person name="Davies R."/>
            <person name="Gaudet P."/>
            <person name="Fey P."/>
            <person name="Pilcher K."/>
            <person name="Chen G."/>
            <person name="Saunders D."/>
            <person name="Sodergren E.J."/>
            <person name="Davis P."/>
            <person name="Kerhornou A."/>
            <person name="Nie X."/>
            <person name="Hall N."/>
            <person name="Anjard C."/>
            <person name="Hemphill L."/>
            <person name="Bason N."/>
            <person name="Farbrother P."/>
            <person name="Desany B."/>
            <person name="Just E."/>
            <person name="Morio T."/>
            <person name="Rost R."/>
            <person name="Churcher C.M."/>
            <person name="Cooper J."/>
            <person name="Haydock S."/>
            <person name="van Driessche N."/>
            <person name="Cronin A."/>
            <person name="Goodhead I."/>
            <person name="Muzny D.M."/>
            <person name="Mourier T."/>
            <person name="Pain A."/>
            <person name="Lu M."/>
            <person name="Harper D."/>
            <person name="Lindsay R."/>
            <person name="Hauser H."/>
            <person name="James K.D."/>
            <person name="Quiles M."/>
            <person name="Madan Babu M."/>
            <person name="Saito T."/>
            <person name="Buchrieser C."/>
            <person name="Wardroper A."/>
            <person name="Felder M."/>
            <person name="Thangavelu M."/>
            <person name="Johnson D."/>
            <person name="Knights A."/>
            <person name="Loulseged H."/>
            <person name="Mungall K.L."/>
            <person name="Oliver K."/>
            <person name="Price C."/>
            <person name="Quail M.A."/>
            <person name="Urushihara H."/>
            <person name="Hernandez J."/>
            <person name="Rabbinowitsch E."/>
            <person name="Steffen D."/>
            <person name="Sanders M."/>
            <person name="Ma J."/>
            <person name="Kohara Y."/>
            <person name="Sharp S."/>
            <person name="Simmonds M.N."/>
            <person name="Spiegler S."/>
            <person name="Tivey A."/>
            <person name="Sugano S."/>
            <person name="White B."/>
            <person name="Walker D."/>
            <person name="Woodward J.R."/>
            <person name="Winckler T."/>
            <person name="Tanaka Y."/>
            <person name="Shaulsky G."/>
            <person name="Schleicher M."/>
            <person name="Weinstock G.M."/>
            <person name="Rosenthal A."/>
            <person name="Cox E.C."/>
            <person name="Chisholm R.L."/>
            <person name="Gibbs R.A."/>
            <person name="Loomis W.F."/>
            <person name="Platzer M."/>
            <person name="Kay R.R."/>
            <person name="Williams J.G."/>
            <person name="Dear P.H."/>
            <person name="Noegel A.A."/>
            <person name="Barrell B.G."/>
            <person name="Kuspa A."/>
        </authorList>
    </citation>
    <scope>NUCLEOTIDE SEQUENCE [LARGE SCALE GENOMIC DNA]</scope>
    <source>
        <strain>AX4</strain>
    </source>
</reference>
<gene>
    <name type="ORF">DDB_G0288213</name>
</gene>
<name>Y7835_DICDI</name>
<proteinExistence type="predicted"/>
<protein>
    <recommendedName>
        <fullName>Uncharacterized protein DDB_G0288213</fullName>
    </recommendedName>
</protein>
<dbReference type="EMBL" id="AAFI02000109">
    <property type="protein sequence ID" value="EAL63337.1"/>
    <property type="molecule type" value="Genomic_DNA"/>
</dbReference>
<dbReference type="RefSeq" id="XP_636846.1">
    <property type="nucleotide sequence ID" value="XM_631754.1"/>
</dbReference>
<dbReference type="SMR" id="Q54J90"/>
<dbReference type="PaxDb" id="44689-DDB0187835"/>
<dbReference type="EnsemblProtists" id="EAL63337">
    <property type="protein sequence ID" value="EAL63337"/>
    <property type="gene ID" value="DDB_G0288213"/>
</dbReference>
<dbReference type="GeneID" id="8626514"/>
<dbReference type="KEGG" id="ddi:DDB_G0288213"/>
<dbReference type="dictyBase" id="DDB_G0288213"/>
<dbReference type="VEuPathDB" id="AmoebaDB:DDB_G0288213"/>
<dbReference type="HOGENOM" id="CLU_2377176_0_0_1"/>
<dbReference type="InParanoid" id="Q54J90"/>
<dbReference type="PRO" id="PR:Q54J90"/>
<dbReference type="Proteomes" id="UP000002195">
    <property type="component" value="Chromosome 5"/>
</dbReference>
<organism>
    <name type="scientific">Dictyostelium discoideum</name>
    <name type="common">Social amoeba</name>
    <dbReference type="NCBI Taxonomy" id="44689"/>
    <lineage>
        <taxon>Eukaryota</taxon>
        <taxon>Amoebozoa</taxon>
        <taxon>Evosea</taxon>
        <taxon>Eumycetozoa</taxon>
        <taxon>Dictyostelia</taxon>
        <taxon>Dictyosteliales</taxon>
        <taxon>Dictyosteliaceae</taxon>
        <taxon>Dictyostelium</taxon>
    </lineage>
</organism>
<keyword id="KW-1185">Reference proteome</keyword>